<keyword id="KW-0002">3D-structure</keyword>
<keyword id="KW-0963">Cytoplasm</keyword>
<keyword id="KW-0216">Detoxification</keyword>
<keyword id="KW-0903">Direct protein sequencing</keyword>
<keyword id="KW-0274">FAD</keyword>
<keyword id="KW-0285">Flavoprotein</keyword>
<keyword id="KW-0349">Heme</keyword>
<keyword id="KW-0408">Iron</keyword>
<keyword id="KW-0479">Metal-binding</keyword>
<keyword id="KW-0520">NAD</keyword>
<keyword id="KW-0521">NADP</keyword>
<keyword id="KW-0560">Oxidoreductase</keyword>
<keyword id="KW-0561">Oxygen transport</keyword>
<keyword id="KW-0614">Plasmid</keyword>
<keyword id="KW-1185">Reference proteome</keyword>
<keyword id="KW-0813">Transport</keyword>
<protein>
    <recommendedName>
        <fullName>Flavohemoprotein</fullName>
    </recommendedName>
    <alternativeName>
        <fullName>FHP</fullName>
    </alternativeName>
    <alternativeName>
        <fullName>Flavohemoglobin</fullName>
    </alternativeName>
    <alternativeName>
        <fullName>Hemoglobin-like protein</fullName>
    </alternativeName>
    <alternativeName>
        <fullName>Nitric oxide dioxygenase</fullName>
        <shortName>NO oxygenase</shortName>
        <shortName>NOD</shortName>
        <ecNumber>1.14.12.17</ecNumber>
    </alternativeName>
</protein>
<geneLocation type="plasmid">
    <name>megaplasmid pHG1</name>
</geneLocation>
<comment type="function">
    <text>Is involved in NO detoxification in an aerobic process, termed nitric oxide dioxygenase (NOD) reaction that utilizes O(2) and NAD(P)H to convert NO to nitrate, which protects the bacterium from various noxious nitrogen compounds. Therefore, plays a central role in the inducible response to nitrosative stress.</text>
</comment>
<comment type="function">
    <text>In the presence of oxygen and NADH, FHP has NADH oxidase activity, which leads to the generation of superoxide and H(2)O(2), both in vitro and in vivo, and it has been suggested that FHP might act as an amplifier of superoxide stress. Under anaerobic conditions, FHP also exhibits nitric oxide reductase and FAD reductase activities. However, all these reactions are much lower than NOD activity.</text>
</comment>
<comment type="catalytic activity">
    <reaction evidence="4">
        <text>2 nitric oxide + NADPH + 2 O2 = 2 nitrate + NADP(+) + H(+)</text>
        <dbReference type="Rhea" id="RHEA:19465"/>
        <dbReference type="ChEBI" id="CHEBI:15378"/>
        <dbReference type="ChEBI" id="CHEBI:15379"/>
        <dbReference type="ChEBI" id="CHEBI:16480"/>
        <dbReference type="ChEBI" id="CHEBI:17632"/>
        <dbReference type="ChEBI" id="CHEBI:57783"/>
        <dbReference type="ChEBI" id="CHEBI:58349"/>
        <dbReference type="EC" id="1.14.12.17"/>
    </reaction>
</comment>
<comment type="catalytic activity">
    <reaction evidence="4">
        <text>2 nitric oxide + NADH + 2 O2 = 2 nitrate + NAD(+) + H(+)</text>
        <dbReference type="Rhea" id="RHEA:19469"/>
        <dbReference type="ChEBI" id="CHEBI:15378"/>
        <dbReference type="ChEBI" id="CHEBI:15379"/>
        <dbReference type="ChEBI" id="CHEBI:16480"/>
        <dbReference type="ChEBI" id="CHEBI:17632"/>
        <dbReference type="ChEBI" id="CHEBI:57540"/>
        <dbReference type="ChEBI" id="CHEBI:57945"/>
        <dbReference type="EC" id="1.14.12.17"/>
    </reaction>
</comment>
<comment type="cofactor">
    <cofactor evidence="5">
        <name>FAD</name>
        <dbReference type="ChEBI" id="CHEBI:57692"/>
    </cofactor>
    <text evidence="5">Binds 1 FAD per subunit.</text>
</comment>
<comment type="cofactor">
    <cofactor evidence="5">
        <name>heme b</name>
        <dbReference type="ChEBI" id="CHEBI:60344"/>
    </cofactor>
    <text evidence="5">Binds 1 heme b group per subunit.</text>
</comment>
<comment type="biophysicochemical properties">
    <kinetics>
        <KM>0.1 uM for NO</KM>
        <KM>80 uM for O(2)</KM>
        <KM>70 uM for NADH</KM>
    </kinetics>
</comment>
<comment type="subunit">
    <text>Monomer.</text>
</comment>
<comment type="subcellular location">
    <subcellularLocation>
        <location>Cytoplasm</location>
    </subcellularLocation>
</comment>
<comment type="induction">
    <text evidence="5">Under oxygen-limited conditions.</text>
</comment>
<comment type="domain">
    <text>Consists of two distinct domains; an N-terminal heme-containing oxygen-binding domain and a C-terminal reductase domain with binding sites for FAD and NAD(P)H.</text>
</comment>
<comment type="miscellaneous">
    <text>No protein-heme interactions have been detected at the distal side of the heme molecule.</text>
</comment>
<comment type="miscellaneous">
    <text>FHP is able to bind phospholipids with high affinity.</text>
</comment>
<comment type="similarity">
    <text evidence="6">Belongs to the globin family. Two-domain flavohemoproteins subfamily.</text>
</comment>
<comment type="similarity">
    <text evidence="6">In the C-terminal section; belongs to the flavoprotein pyridine nucleotide cytochrome reductase family.</text>
</comment>
<accession>P39662</accession>
<accession>Q7WXD4</accession>
<proteinExistence type="evidence at protein level"/>
<reference key="1">
    <citation type="journal article" date="1994" name="J. Biol. Chem.">
        <title>Primary sequence and evidence for a physiological function of the flavohemoprotein of Alcaligenes eutrophus.</title>
        <authorList>
            <person name="Cramm R."/>
            <person name="Siddiqui R.A."/>
            <person name="Friedrich B."/>
        </authorList>
    </citation>
    <scope>NUCLEOTIDE SEQUENCE [GENOMIC DNA]</scope>
</reference>
<reference key="2">
    <citation type="journal article" date="2003" name="J. Mol. Biol.">
        <title>Complete nucleotide sequence of pHG1: a Ralstonia eutropha H16 megaplasmid encoding key enzymes of H(2)-based lithoautotrophy and anaerobiosis.</title>
        <authorList>
            <person name="Schwartz E."/>
            <person name="Henne A."/>
            <person name="Cramm R."/>
            <person name="Eitinger T."/>
            <person name="Friedrich B."/>
            <person name="Gottschalk G."/>
        </authorList>
    </citation>
    <scope>NUCLEOTIDE SEQUENCE [LARGE SCALE GENOMIC DNA]</scope>
    <source>
        <strain>ATCC 17699 / DSM 428 / KCTC 22496 / NCIMB 10442 / H16 / Stanier 337</strain>
    </source>
</reference>
<reference key="3">
    <citation type="journal article" date="1992" name="Proc. Natl. Acad. Sci. U.S.A.">
        <title>Yeast flavohemoglobin is an ancient protein related to globins and a reductase family.</title>
        <authorList>
            <person name="Zhu H."/>
            <person name="Riggs A.F."/>
        </authorList>
    </citation>
    <scope>PARTIAL PROTEIN SEQUENCE</scope>
</reference>
<reference key="4">
    <citation type="journal article" date="1979" name="Biochim. Biophys. Acta">
        <title>An oxygen-binding flavohemoprotein from Alcaligenes eutrophus.</title>
        <authorList>
            <person name="Probst I."/>
            <person name="Wolf G."/>
            <person name="Schlegel H.G."/>
        </authorList>
    </citation>
    <scope>COFACTOR</scope>
    <scope>INDUCTION</scope>
    <scope>SPECTRAL PROPERTIES</scope>
</reference>
<reference key="5">
    <citation type="journal article" date="2000" name="J. Biol. Chem.">
        <title>Nitric-oxide dioxygenase activity and function of flavohemoglobins. Sensitivity to nitric oxide and carbon monoxide inhibition.</title>
        <authorList>
            <person name="Gardner P.R."/>
            <person name="Gardner A.M."/>
            <person name="Martin L.A."/>
            <person name="Dou Y."/>
            <person name="Li T."/>
            <person name="Olson J.S."/>
            <person name="Zhu H."/>
            <person name="Riggs A.F."/>
        </authorList>
    </citation>
    <scope>ENZYME ACTIVITY</scope>
</reference>
<reference key="6">
    <citation type="journal article" date="1995" name="EMBO J.">
        <title>Crystal structure of the flavohemoglobin from Alcaligenes eutrophus at 1.75-A resolution.</title>
        <authorList>
            <person name="Ermler U."/>
            <person name="Siddiqui R.A."/>
            <person name="Cramm R."/>
            <person name="Friedrich B."/>
        </authorList>
    </citation>
    <scope>X-RAY CRYSTALLOGRAPHY (1.75 ANGSTROMS)</scope>
</reference>
<reference key="7">
    <citation type="journal article" date="1999" name="Eur. J. Biochem.">
        <title>Phospholipid bound to the flavohemoprotein from Alcaligenes eutrophus.</title>
        <authorList>
            <person name="Ollesch G."/>
            <person name="Kaunzinger A."/>
            <person name="Juchelka D."/>
            <person name="Schubert-Zsilavecz M."/>
            <person name="Ermler U."/>
        </authorList>
    </citation>
    <scope>X-RAY CRYSTALLOGRAPHY (2.5 ANGSTROMS) OF NATIVE PROTEIN AND MUTANT V98F</scope>
    <scope>PHOSPHOLIPID BINDING</scope>
    <scope>MUTAGENESIS OF ALA-60 AND VAL-98</scope>
</reference>
<dbReference type="EC" id="1.14.12.17"/>
<dbReference type="EMBL" id="X74334">
    <property type="protein sequence ID" value="CAA52381.1"/>
    <property type="molecule type" value="Genomic_DNA"/>
</dbReference>
<dbReference type="EMBL" id="AY305378">
    <property type="protein sequence ID" value="AAP85952.1"/>
    <property type="molecule type" value="Genomic_DNA"/>
</dbReference>
<dbReference type="PIR" id="A53396">
    <property type="entry name" value="A53396"/>
</dbReference>
<dbReference type="RefSeq" id="WP_011154115.1">
    <property type="nucleotide sequence ID" value="NC_005241.1"/>
</dbReference>
<dbReference type="PDB" id="1CQX">
    <property type="method" value="X-ray"/>
    <property type="resolution" value="1.75 A"/>
    <property type="chains" value="A/B=1-403"/>
</dbReference>
<dbReference type="PDB" id="3OZU">
    <property type="method" value="X-ray"/>
    <property type="resolution" value="2.00 A"/>
    <property type="chains" value="A=1-403"/>
</dbReference>
<dbReference type="PDB" id="3OZV">
    <property type="method" value="X-ray"/>
    <property type="resolution" value="2.40 A"/>
    <property type="chains" value="A/B=1-403"/>
</dbReference>
<dbReference type="PDB" id="3OZW">
    <property type="method" value="X-ray"/>
    <property type="resolution" value="2.30 A"/>
    <property type="chains" value="A/B=1-403"/>
</dbReference>
<dbReference type="PDBsum" id="1CQX"/>
<dbReference type="PDBsum" id="3OZU"/>
<dbReference type="PDBsum" id="3OZV"/>
<dbReference type="PDBsum" id="3OZW"/>
<dbReference type="SMR" id="P39662"/>
<dbReference type="DrugBank" id="DB03979">
    <property type="generic name" value="1-[Glycerolylphosphonyl]-2-[8-(2-Hexyl-Cyclopropyl)-Octanal-1-Yl]-3-[Hexadecanal-1-Yl]-Glycerol"/>
</dbReference>
<dbReference type="DrugBank" id="DB03147">
    <property type="generic name" value="Flavin adenine dinucleotide"/>
</dbReference>
<dbReference type="KEGG" id="reh:PHG200"/>
<dbReference type="PATRIC" id="fig|381666.6.peg.150"/>
<dbReference type="eggNOG" id="COG1017">
    <property type="taxonomic scope" value="Bacteria"/>
</dbReference>
<dbReference type="eggNOG" id="COG1018">
    <property type="taxonomic scope" value="Bacteria"/>
</dbReference>
<dbReference type="HOGENOM" id="CLU_003827_12_0_4"/>
<dbReference type="OrthoDB" id="9801223at2"/>
<dbReference type="BRENDA" id="1.14.12.17">
    <property type="organism ID" value="231"/>
</dbReference>
<dbReference type="SABIO-RK" id="P39662"/>
<dbReference type="EvolutionaryTrace" id="P39662"/>
<dbReference type="Proteomes" id="UP000008210">
    <property type="component" value="Plasmid megaplasmid pHG1"/>
</dbReference>
<dbReference type="GO" id="GO:0005737">
    <property type="term" value="C:cytoplasm"/>
    <property type="evidence" value="ECO:0007669"/>
    <property type="project" value="UniProtKB-SubCell"/>
</dbReference>
<dbReference type="GO" id="GO:0071949">
    <property type="term" value="F:FAD binding"/>
    <property type="evidence" value="ECO:0007669"/>
    <property type="project" value="InterPro"/>
</dbReference>
<dbReference type="GO" id="GO:0020037">
    <property type="term" value="F:heme binding"/>
    <property type="evidence" value="ECO:0007669"/>
    <property type="project" value="InterPro"/>
</dbReference>
<dbReference type="GO" id="GO:0046872">
    <property type="term" value="F:metal ion binding"/>
    <property type="evidence" value="ECO:0007669"/>
    <property type="project" value="UniProtKB-KW"/>
</dbReference>
<dbReference type="GO" id="GO:0008941">
    <property type="term" value="F:nitric oxide dioxygenase NAD(P)H activity"/>
    <property type="evidence" value="ECO:0000314"/>
    <property type="project" value="CACAO"/>
</dbReference>
<dbReference type="GO" id="GO:0019825">
    <property type="term" value="F:oxygen binding"/>
    <property type="evidence" value="ECO:0007669"/>
    <property type="project" value="InterPro"/>
</dbReference>
<dbReference type="GO" id="GO:0005344">
    <property type="term" value="F:oxygen carrier activity"/>
    <property type="evidence" value="ECO:0007669"/>
    <property type="project" value="UniProtKB-UniRule"/>
</dbReference>
<dbReference type="GO" id="GO:0071500">
    <property type="term" value="P:cellular response to nitrosative stress"/>
    <property type="evidence" value="ECO:0007669"/>
    <property type="project" value="TreeGrafter"/>
</dbReference>
<dbReference type="GO" id="GO:0046210">
    <property type="term" value="P:nitric oxide catabolic process"/>
    <property type="evidence" value="ECO:0007669"/>
    <property type="project" value="TreeGrafter"/>
</dbReference>
<dbReference type="GO" id="GO:0009636">
    <property type="term" value="P:response to toxic substance"/>
    <property type="evidence" value="ECO:0007669"/>
    <property type="project" value="UniProtKB-KW"/>
</dbReference>
<dbReference type="CDD" id="cd14779">
    <property type="entry name" value="FHP_Ae-globin-like"/>
    <property type="match status" value="1"/>
</dbReference>
<dbReference type="CDD" id="cd06184">
    <property type="entry name" value="flavohem_like_fad_nad_binding"/>
    <property type="match status" value="1"/>
</dbReference>
<dbReference type="FunFam" id="1.10.490.10:FF:000003">
    <property type="entry name" value="Flavohemoprotein"/>
    <property type="match status" value="1"/>
</dbReference>
<dbReference type="FunFam" id="2.40.30.10:FF:000034">
    <property type="entry name" value="Flavohemoprotein"/>
    <property type="match status" value="1"/>
</dbReference>
<dbReference type="FunFam" id="3.40.50.80:FF:000010">
    <property type="entry name" value="Flavohemoprotein"/>
    <property type="match status" value="1"/>
</dbReference>
<dbReference type="Gene3D" id="1.10.490.10">
    <property type="entry name" value="Globins"/>
    <property type="match status" value="1"/>
</dbReference>
<dbReference type="Gene3D" id="3.40.50.80">
    <property type="entry name" value="Nucleotide-binding domain of ferredoxin-NADP reductase (FNR) module"/>
    <property type="match status" value="1"/>
</dbReference>
<dbReference type="Gene3D" id="2.40.30.10">
    <property type="entry name" value="Translation factors"/>
    <property type="match status" value="1"/>
</dbReference>
<dbReference type="HAMAP" id="MF_01252">
    <property type="entry name" value="Hmp"/>
    <property type="match status" value="1"/>
</dbReference>
<dbReference type="InterPro" id="IPR008333">
    <property type="entry name" value="Cbr1-like_FAD-bd_dom"/>
</dbReference>
<dbReference type="InterPro" id="IPR017927">
    <property type="entry name" value="FAD-bd_FR_type"/>
</dbReference>
<dbReference type="InterPro" id="IPR039261">
    <property type="entry name" value="FNR_nucleotide-bd"/>
</dbReference>
<dbReference type="InterPro" id="IPR000971">
    <property type="entry name" value="Globin"/>
</dbReference>
<dbReference type="InterPro" id="IPR009050">
    <property type="entry name" value="Globin-like_sf"/>
</dbReference>
<dbReference type="InterPro" id="IPR012292">
    <property type="entry name" value="Globin/Proto"/>
</dbReference>
<dbReference type="InterPro" id="IPR023950">
    <property type="entry name" value="Hmp"/>
</dbReference>
<dbReference type="InterPro" id="IPR001433">
    <property type="entry name" value="OxRdtase_FAD/NAD-bd"/>
</dbReference>
<dbReference type="InterPro" id="IPR017938">
    <property type="entry name" value="Riboflavin_synthase-like_b-brl"/>
</dbReference>
<dbReference type="NCBIfam" id="NF009805">
    <property type="entry name" value="PRK13289.1"/>
    <property type="match status" value="1"/>
</dbReference>
<dbReference type="PANTHER" id="PTHR43396">
    <property type="entry name" value="FLAVOHEMOPROTEIN"/>
    <property type="match status" value="1"/>
</dbReference>
<dbReference type="PANTHER" id="PTHR43396:SF3">
    <property type="entry name" value="FLAVOHEMOPROTEIN"/>
    <property type="match status" value="1"/>
</dbReference>
<dbReference type="Pfam" id="PF00970">
    <property type="entry name" value="FAD_binding_6"/>
    <property type="match status" value="1"/>
</dbReference>
<dbReference type="Pfam" id="PF00042">
    <property type="entry name" value="Globin"/>
    <property type="match status" value="1"/>
</dbReference>
<dbReference type="Pfam" id="PF00175">
    <property type="entry name" value="NAD_binding_1"/>
    <property type="match status" value="1"/>
</dbReference>
<dbReference type="PRINTS" id="PR00410">
    <property type="entry name" value="PHEHYDRXLASE"/>
</dbReference>
<dbReference type="SUPFAM" id="SSF52343">
    <property type="entry name" value="Ferredoxin reductase-like, C-terminal NADP-linked domain"/>
    <property type="match status" value="1"/>
</dbReference>
<dbReference type="SUPFAM" id="SSF46458">
    <property type="entry name" value="Globin-like"/>
    <property type="match status" value="1"/>
</dbReference>
<dbReference type="SUPFAM" id="SSF63380">
    <property type="entry name" value="Riboflavin synthase domain-like"/>
    <property type="match status" value="1"/>
</dbReference>
<dbReference type="PROSITE" id="PS51384">
    <property type="entry name" value="FAD_FR"/>
    <property type="match status" value="1"/>
</dbReference>
<dbReference type="PROSITE" id="PS01033">
    <property type="entry name" value="GLOBIN"/>
    <property type="match status" value="1"/>
</dbReference>
<gene>
    <name type="primary">hmp</name>
    <name type="synonym">fhp</name>
    <name type="ordered locus">PHG200</name>
</gene>
<name>HMP_CUPNH</name>
<evidence type="ECO:0000250" key="1"/>
<evidence type="ECO:0000255" key="2">
    <source>
        <dbReference type="PROSITE-ProRule" id="PRU00238"/>
    </source>
</evidence>
<evidence type="ECO:0000269" key="3">
    <source>
    </source>
</evidence>
<evidence type="ECO:0000269" key="4">
    <source>
    </source>
</evidence>
<evidence type="ECO:0000269" key="5">
    <source>
    </source>
</evidence>
<evidence type="ECO:0000305" key="6"/>
<evidence type="ECO:0007829" key="7">
    <source>
        <dbReference type="PDB" id="1CQX"/>
    </source>
</evidence>
<evidence type="ECO:0007829" key="8">
    <source>
        <dbReference type="PDB" id="3OZV"/>
    </source>
</evidence>
<evidence type="ECO:0007829" key="9">
    <source>
        <dbReference type="PDB" id="3OZW"/>
    </source>
</evidence>
<organism>
    <name type="scientific">Cupriavidus necator (strain ATCC 17699 / DSM 428 / KCTC 22496 / NCIMB 10442 / H16 / Stanier 337)</name>
    <name type="common">Ralstonia eutropha</name>
    <dbReference type="NCBI Taxonomy" id="381666"/>
    <lineage>
        <taxon>Bacteria</taxon>
        <taxon>Pseudomonadati</taxon>
        <taxon>Pseudomonadota</taxon>
        <taxon>Betaproteobacteria</taxon>
        <taxon>Burkholderiales</taxon>
        <taxon>Burkholderiaceae</taxon>
        <taxon>Cupriavidus</taxon>
    </lineage>
</organism>
<feature type="chain" id="PRO_0000052441" description="Flavohemoprotein">
    <location>
        <begin position="1"/>
        <end position="403"/>
    </location>
</feature>
<feature type="domain" description="Globin" evidence="2">
    <location>
        <begin position="1"/>
        <end position="138"/>
    </location>
</feature>
<feature type="domain" description="FAD-binding FR-type">
    <location>
        <begin position="152"/>
        <end position="262"/>
    </location>
</feature>
<feature type="region of interest" description="Reductase">
    <location>
        <begin position="149"/>
        <end position="403"/>
    </location>
</feature>
<feature type="active site" description="Charge relay system">
    <location>
        <position position="95"/>
    </location>
</feature>
<feature type="active site" description="Charge relay system">
    <location>
        <position position="137"/>
    </location>
</feature>
<feature type="binding site" description="proximal binding residue">
    <location>
        <position position="85"/>
    </location>
    <ligand>
        <name>heme b</name>
        <dbReference type="ChEBI" id="CHEBI:60344"/>
    </ligand>
    <ligandPart>
        <name>Fe</name>
        <dbReference type="ChEBI" id="CHEBI:18248"/>
    </ligandPart>
</feature>
<feature type="binding site">
    <location>
        <position position="190"/>
    </location>
    <ligand>
        <name>FAD</name>
        <dbReference type="ChEBI" id="CHEBI:57692"/>
    </ligand>
</feature>
<feature type="binding site">
    <location>
        <begin position="206"/>
        <end position="209"/>
    </location>
    <ligand>
        <name>FAD</name>
        <dbReference type="ChEBI" id="CHEBI:57692"/>
    </ligand>
</feature>
<feature type="binding site" evidence="1">
    <location>
        <begin position="275"/>
        <end position="280"/>
    </location>
    <ligand>
        <name>NADP(+)</name>
        <dbReference type="ChEBI" id="CHEBI:58349"/>
    </ligand>
</feature>
<feature type="binding site">
    <location>
        <begin position="395"/>
        <end position="398"/>
    </location>
    <ligand>
        <name>FAD</name>
        <dbReference type="ChEBI" id="CHEBI:57692"/>
    </ligand>
</feature>
<feature type="site" description="Involved in heme-bound ligand stabilization and O-O bond activation">
    <location>
        <position position="29"/>
    </location>
</feature>
<feature type="site" description="Influences the redox potential of the prosthetic heme and FAD groups">
    <location>
        <position position="84"/>
    </location>
</feature>
<feature type="site" description="Influences the redox potential of the prosthetic heme and FAD groups">
    <location>
        <position position="394"/>
    </location>
</feature>
<feature type="mutagenesis site" description="Does not affect phospholipid-binding." evidence="3">
    <original>A</original>
    <variation>Y</variation>
    <location>
        <position position="60"/>
    </location>
</feature>
<feature type="mutagenesis site" description="Blocks phospholipid-binding." evidence="3">
    <original>V</original>
    <variation>F</variation>
    <location>
        <position position="98"/>
    </location>
</feature>
<feature type="sequence conflict" description="In Ref. 1; CAA52381." evidence="6" ref="1">
    <original>S</original>
    <variation>T</variation>
    <location>
        <position position="218"/>
    </location>
</feature>
<feature type="helix" evidence="7">
    <location>
        <begin position="4"/>
        <end position="19"/>
    </location>
</feature>
<feature type="helix" evidence="7">
    <location>
        <begin position="21"/>
        <end position="35"/>
    </location>
</feature>
<feature type="helix" evidence="7">
    <location>
        <begin position="37"/>
        <end position="41"/>
    </location>
</feature>
<feature type="helix" evidence="9">
    <location>
        <begin position="47"/>
        <end position="49"/>
    </location>
</feature>
<feature type="helix" evidence="7">
    <location>
        <begin position="50"/>
        <end position="67"/>
    </location>
</feature>
<feature type="helix" evidence="7">
    <location>
        <begin position="71"/>
        <end position="88"/>
    </location>
</feature>
<feature type="helix" evidence="7">
    <location>
        <begin position="92"/>
        <end position="94"/>
    </location>
</feature>
<feature type="helix" evidence="7">
    <location>
        <begin position="95"/>
        <end position="110"/>
    </location>
</feature>
<feature type="helix" evidence="7">
    <location>
        <begin position="111"/>
        <end position="113"/>
    </location>
</feature>
<feature type="helix" evidence="7">
    <location>
        <begin position="116"/>
        <end position="145"/>
    </location>
</feature>
<feature type="strand" evidence="7">
    <location>
        <begin position="155"/>
        <end position="164"/>
    </location>
</feature>
<feature type="strand" evidence="7">
    <location>
        <begin position="166"/>
        <end position="176"/>
    </location>
</feature>
<feature type="strand" evidence="7">
    <location>
        <begin position="190"/>
        <end position="196"/>
    </location>
</feature>
<feature type="turn" evidence="7">
    <location>
        <begin position="198"/>
        <end position="200"/>
    </location>
</feature>
<feature type="strand" evidence="7">
    <location>
        <begin position="201"/>
        <end position="209"/>
    </location>
</feature>
<feature type="strand" evidence="7">
    <location>
        <begin position="219"/>
        <end position="224"/>
    </location>
</feature>
<feature type="strand" evidence="9">
    <location>
        <begin position="229"/>
        <end position="231"/>
    </location>
</feature>
<feature type="helix" evidence="7">
    <location>
        <begin position="235"/>
        <end position="243"/>
    </location>
</feature>
<feature type="strand" evidence="7">
    <location>
        <begin position="249"/>
        <end position="252"/>
    </location>
</feature>
<feature type="strand" evidence="7">
    <location>
        <begin position="269"/>
        <end position="275"/>
    </location>
</feature>
<feature type="helix" evidence="7">
    <location>
        <begin position="278"/>
        <end position="288"/>
    </location>
</feature>
<feature type="strand" evidence="9">
    <location>
        <begin position="290"/>
        <end position="292"/>
    </location>
</feature>
<feature type="strand" evidence="7">
    <location>
        <begin position="296"/>
        <end position="303"/>
    </location>
</feature>
<feature type="strand" evidence="7">
    <location>
        <begin position="305"/>
        <end position="307"/>
    </location>
</feature>
<feature type="helix" evidence="7">
    <location>
        <begin position="309"/>
        <end position="320"/>
    </location>
</feature>
<feature type="strand" evidence="7">
    <location>
        <begin position="324"/>
        <end position="332"/>
    </location>
</feature>
<feature type="turn" evidence="7">
    <location>
        <begin position="339"/>
        <end position="341"/>
    </location>
</feature>
<feature type="strand" evidence="7">
    <location>
        <begin position="344"/>
        <end position="348"/>
    </location>
</feature>
<feature type="helix" evidence="7">
    <location>
        <begin position="351"/>
        <end position="353"/>
    </location>
</feature>
<feature type="helix" evidence="7">
    <location>
        <begin position="355"/>
        <end position="358"/>
    </location>
</feature>
<feature type="strand" evidence="7">
    <location>
        <begin position="364"/>
        <end position="370"/>
    </location>
</feature>
<feature type="helix" evidence="7">
    <location>
        <begin position="371"/>
        <end position="383"/>
    </location>
</feature>
<feature type="helix" evidence="7">
    <location>
        <begin position="388"/>
        <end position="390"/>
    </location>
</feature>
<feature type="strand" evidence="7">
    <location>
        <begin position="391"/>
        <end position="393"/>
    </location>
</feature>
<feature type="strand" evidence="8">
    <location>
        <begin position="396"/>
        <end position="398"/>
    </location>
</feature>
<sequence length="403" mass="44782">MLTQKTKDIVKATAPVLAEHGYDIIKCFYQRMFEAHPELKNVFNMAHQEQGQQQQALARAVYAYAENIEDPNSLMAVLKNIANKHASLGVKPEQYPIVGEHLLAAIKEVLGNAATDDIISAWAQAYGNLADVLMGMESELYERSAEQPGGWKGWRTFVIREKRPESDVITSFILEPADGGPVVNFEPGQYTSVAIDVPALGLQQIRQYSLSDMPNGRSYRISVKREGGGPQPPGYVSNLLHDHVNVGDQVKLAAPYGSFHIDVDAKTPIVLISGGVGLTPMVSMLKVALQAPPRQVVFVHGARNSAVHAMRDRLREAAKTYENLDLFVFYDQPLPEDVQGRDYDYPGLVDVKQIEKSILLPDADYYICGPIPFMRMQHDALKNLGIHEARIHYEVFGPDLFAE</sequence>